<accession>P26153</accession>
<dbReference type="EMBL" id="J05643">
    <property type="status" value="NOT_ANNOTATED_CDS"/>
    <property type="molecule type" value="mRNA"/>
</dbReference>
<dbReference type="PIR" id="A39218">
    <property type="entry name" value="A39218"/>
</dbReference>
<dbReference type="SMR" id="P26153"/>
<dbReference type="ComplexPortal" id="CPX-184">
    <property type="entry name" value="Neuronal nicotinic acetylcholine receptor complex, alpha2-beta4"/>
</dbReference>
<dbReference type="ComplexPortal" id="CPX-206">
    <property type="entry name" value="Neuronal nicotinic acetylcholine receptor complex, alpha3-beta4"/>
</dbReference>
<dbReference type="ComplexPortal" id="CPX-207">
    <property type="entry name" value="Neuronal nicotinic acetylcholine receptor complex, alpha3-alpha5-beta4"/>
</dbReference>
<dbReference type="ComplexPortal" id="CPX-214">
    <property type="entry name" value="Neuronal nicotinic acetylcholine receptor complex, alpha3-alpha6-beta4"/>
</dbReference>
<dbReference type="ComplexPortal" id="CPX-221">
    <property type="entry name" value="Neuronal nicotinic acetylcholine receptor complex, alpha4-beta4"/>
</dbReference>
<dbReference type="FunCoup" id="P26153">
    <property type="interactions" value="43"/>
</dbReference>
<dbReference type="IntAct" id="P26153">
    <property type="interactions" value="3"/>
</dbReference>
<dbReference type="STRING" id="9031.ENSGALP00000039014"/>
<dbReference type="GlyCosmos" id="P26153">
    <property type="glycosylation" value="3 sites, No reported glycans"/>
</dbReference>
<dbReference type="GlyGen" id="P26153">
    <property type="glycosylation" value="3 sites"/>
</dbReference>
<dbReference type="PaxDb" id="9031-ENSGALP00000039014"/>
<dbReference type="VEuPathDB" id="HostDB:geneid_395613"/>
<dbReference type="eggNOG" id="KOG3645">
    <property type="taxonomic scope" value="Eukaryota"/>
</dbReference>
<dbReference type="InParanoid" id="P26153"/>
<dbReference type="OrthoDB" id="5975154at2759"/>
<dbReference type="Proteomes" id="UP000000539">
    <property type="component" value="Unassembled WGS sequence"/>
</dbReference>
<dbReference type="GO" id="GO:0005892">
    <property type="term" value="C:acetylcholine-gated channel complex"/>
    <property type="evidence" value="ECO:0000318"/>
    <property type="project" value="GO_Central"/>
</dbReference>
<dbReference type="GO" id="GO:0043005">
    <property type="term" value="C:neuron projection"/>
    <property type="evidence" value="ECO:0000318"/>
    <property type="project" value="GO_Central"/>
</dbReference>
<dbReference type="GO" id="GO:0005886">
    <property type="term" value="C:plasma membrane"/>
    <property type="evidence" value="ECO:0000318"/>
    <property type="project" value="GO_Central"/>
</dbReference>
<dbReference type="GO" id="GO:0045211">
    <property type="term" value="C:postsynaptic membrane"/>
    <property type="evidence" value="ECO:0007669"/>
    <property type="project" value="UniProtKB-KW"/>
</dbReference>
<dbReference type="GO" id="GO:0045202">
    <property type="term" value="C:synapse"/>
    <property type="evidence" value="ECO:0000318"/>
    <property type="project" value="GO_Central"/>
</dbReference>
<dbReference type="GO" id="GO:0015464">
    <property type="term" value="F:acetylcholine receptor activity"/>
    <property type="evidence" value="ECO:0000318"/>
    <property type="project" value="GO_Central"/>
</dbReference>
<dbReference type="GO" id="GO:0022848">
    <property type="term" value="F:acetylcholine-gated monoatomic cation-selective channel activity"/>
    <property type="evidence" value="ECO:0000318"/>
    <property type="project" value="GO_Central"/>
</dbReference>
<dbReference type="GO" id="GO:0095500">
    <property type="term" value="P:acetylcholine receptor signaling pathway"/>
    <property type="evidence" value="ECO:0000318"/>
    <property type="project" value="GO_Central"/>
</dbReference>
<dbReference type="GO" id="GO:0007268">
    <property type="term" value="P:chemical synaptic transmission"/>
    <property type="evidence" value="ECO:0000318"/>
    <property type="project" value="GO_Central"/>
</dbReference>
<dbReference type="GO" id="GO:0051899">
    <property type="term" value="P:membrane depolarization"/>
    <property type="evidence" value="ECO:0000318"/>
    <property type="project" value="GO_Central"/>
</dbReference>
<dbReference type="GO" id="GO:0034220">
    <property type="term" value="P:monoatomic ion transmembrane transport"/>
    <property type="evidence" value="ECO:0000318"/>
    <property type="project" value="GO_Central"/>
</dbReference>
<dbReference type="CDD" id="cd19027">
    <property type="entry name" value="LGIC_ECD_nAChR_B4"/>
    <property type="match status" value="1"/>
</dbReference>
<dbReference type="CDD" id="cd19064">
    <property type="entry name" value="LGIC_TM_nAChR"/>
    <property type="match status" value="1"/>
</dbReference>
<dbReference type="FunFam" id="2.70.170.10:FF:000006">
    <property type="entry name" value="Cholinergic receptor nicotinic beta 2 subunit"/>
    <property type="match status" value="1"/>
</dbReference>
<dbReference type="FunFam" id="1.20.58.390:FF:000008">
    <property type="entry name" value="Cholinergic receptor nicotinic beta 4 subunit"/>
    <property type="match status" value="1"/>
</dbReference>
<dbReference type="FunFam" id="1.20.58.390:FF:000034">
    <property type="entry name" value="Cholinergic receptor nicotinic beta 4 subunit"/>
    <property type="match status" value="1"/>
</dbReference>
<dbReference type="Gene3D" id="2.70.170.10">
    <property type="entry name" value="Neurotransmitter-gated ion-channel ligand-binding domain"/>
    <property type="match status" value="1"/>
</dbReference>
<dbReference type="Gene3D" id="1.20.58.390">
    <property type="entry name" value="Neurotransmitter-gated ion-channel transmembrane domain"/>
    <property type="match status" value="2"/>
</dbReference>
<dbReference type="InterPro" id="IPR006202">
    <property type="entry name" value="Neur_chan_lig-bd"/>
</dbReference>
<dbReference type="InterPro" id="IPR036734">
    <property type="entry name" value="Neur_chan_lig-bd_sf"/>
</dbReference>
<dbReference type="InterPro" id="IPR006201">
    <property type="entry name" value="Neur_channel"/>
</dbReference>
<dbReference type="InterPro" id="IPR036719">
    <property type="entry name" value="Neuro-gated_channel_TM_sf"/>
</dbReference>
<dbReference type="InterPro" id="IPR038050">
    <property type="entry name" value="Neuro_actylchol_rec"/>
</dbReference>
<dbReference type="InterPro" id="IPR006029">
    <property type="entry name" value="Neurotrans-gated_channel_TM"/>
</dbReference>
<dbReference type="InterPro" id="IPR018000">
    <property type="entry name" value="Neurotransmitter_ion_chnl_CS"/>
</dbReference>
<dbReference type="InterPro" id="IPR002394">
    <property type="entry name" value="Nicotinic_acetylcholine_rcpt"/>
</dbReference>
<dbReference type="NCBIfam" id="TIGR00860">
    <property type="entry name" value="LIC"/>
    <property type="match status" value="1"/>
</dbReference>
<dbReference type="PANTHER" id="PTHR18945">
    <property type="entry name" value="NEUROTRANSMITTER GATED ION CHANNEL"/>
    <property type="match status" value="1"/>
</dbReference>
<dbReference type="Pfam" id="PF02931">
    <property type="entry name" value="Neur_chan_LBD"/>
    <property type="match status" value="1"/>
</dbReference>
<dbReference type="Pfam" id="PF02932">
    <property type="entry name" value="Neur_chan_memb"/>
    <property type="match status" value="1"/>
</dbReference>
<dbReference type="PRINTS" id="PR00254">
    <property type="entry name" value="NICOTINICR"/>
</dbReference>
<dbReference type="PRINTS" id="PR00252">
    <property type="entry name" value="NRIONCHANNEL"/>
</dbReference>
<dbReference type="SUPFAM" id="SSF90112">
    <property type="entry name" value="Neurotransmitter-gated ion-channel transmembrane pore"/>
    <property type="match status" value="1"/>
</dbReference>
<dbReference type="SUPFAM" id="SSF63712">
    <property type="entry name" value="Nicotinic receptor ligand binding domain-like"/>
    <property type="match status" value="1"/>
</dbReference>
<dbReference type="PROSITE" id="PS00236">
    <property type="entry name" value="NEUROTR_ION_CHANNEL"/>
    <property type="match status" value="1"/>
</dbReference>
<feature type="signal peptide" evidence="8">
    <location>
        <begin position="1" status="less than"/>
        <end position="3"/>
    </location>
</feature>
<feature type="chain" id="PRO_0000000392" description="Neuronal acetylcholine receptor subunit beta-4">
    <location>
        <begin position="4"/>
        <end position="470"/>
    </location>
</feature>
<feature type="topological domain" description="Extracellular" evidence="8">
    <location>
        <begin position="4"/>
        <end position="216"/>
    </location>
</feature>
<feature type="transmembrane region" description="Helical" evidence="8">
    <location>
        <begin position="217"/>
        <end position="237"/>
    </location>
</feature>
<feature type="topological domain" description="Cytoplasmic" evidence="8">
    <location>
        <begin position="238"/>
        <end position="245"/>
    </location>
</feature>
<feature type="transmembrane region" description="Helical" evidence="8">
    <location>
        <begin position="246"/>
        <end position="266"/>
    </location>
</feature>
<feature type="topological domain" description="Extracellular" evidence="8">
    <location>
        <begin position="267"/>
        <end position="278"/>
    </location>
</feature>
<feature type="transmembrane region" description="Helical" evidence="8">
    <location>
        <begin position="279"/>
        <end position="299"/>
    </location>
</feature>
<feature type="topological domain" description="Cytoplasmic">
    <location>
        <begin position="300"/>
        <end position="438"/>
    </location>
</feature>
<feature type="transmembrane region" description="Helical" evidence="8">
    <location>
        <begin position="439"/>
        <end position="459"/>
    </location>
</feature>
<feature type="topological domain" description="Extracellular" evidence="8">
    <location>
        <begin position="460"/>
        <end position="470"/>
    </location>
</feature>
<feature type="binding site" evidence="6">
    <location>
        <position position="242"/>
    </location>
    <ligand>
        <name>Na(+)</name>
        <dbReference type="ChEBI" id="CHEBI:29101"/>
    </ligand>
</feature>
<feature type="site" description="Key residue for a low dissociation (K(off)) from the conotoxin BuIA" evidence="4">
    <location>
        <position position="114"/>
    </location>
</feature>
<feature type="glycosylation site" description="N-linked (GlcNAc...) asparagine" evidence="8">
    <location>
        <position position="29"/>
    </location>
</feature>
<feature type="glycosylation site" description="N-linked (GlcNAc...) asparagine" evidence="8">
    <location>
        <position position="118"/>
    </location>
</feature>
<feature type="glycosylation site" description="N-linked (GlcNAc...) asparagine" evidence="8">
    <location>
        <position position="146"/>
    </location>
</feature>
<feature type="disulfide bond" evidence="1">
    <location>
        <begin position="133"/>
        <end position="147"/>
    </location>
</feature>
<feature type="non-terminal residue">
    <location>
        <position position="1"/>
    </location>
</feature>
<comment type="function">
    <text evidence="4 6 7">Component of neuronal acetylcholine receptors (nAChRs) that function as pentameric, ligand-gated cation channels with high calcium permeability among other activities. nAChRs are excitatory neurotrasnmitter receptors formed by a collection of nAChR subunits known to mediate synaptic transmission in the nervous system and the neuromuscular junction. Each nAchR subunit confers differential attributes to channel properties, including activation, deactivation and desensitization kinetics, pH sensitivity, cation permeability, and binding to allosteric modulators. CHRNB4 forms heteropentameric neuronal acetylcholine receptors with CHRNA2, CHRNA3 and CHRNA4, as well as CHRNA5 and CHRNB3 as accesory subunits. CHRNA3:CHRNB4 being predominant in neurons of the autonomic ganglia, it is known as ganglionic nicotinic receptor (By similarity). CHRNA3:CHRNB4 or CHRNA3:CHRNA5:CHRNB4 play also an important role in the habenulo-interpeduncular tract, modulating the mesolimbic dopamine system and affecting reward circuits and addiction (By similarity). Hypothalamic CHRNA3:CHRNB4 nAChR activation by nicotine leads to activation of POMC neurons and a decrease in food intake (By similarity).</text>
</comment>
<comment type="catalytic activity">
    <reaction evidence="6">
        <text>Ca(2+)(in) = Ca(2+)(out)</text>
        <dbReference type="Rhea" id="RHEA:29671"/>
        <dbReference type="ChEBI" id="CHEBI:29108"/>
    </reaction>
</comment>
<comment type="catalytic activity">
    <reaction evidence="3">
        <text>K(+)(in) = K(+)(out)</text>
        <dbReference type="Rhea" id="RHEA:29463"/>
        <dbReference type="ChEBI" id="CHEBI:29103"/>
    </reaction>
</comment>
<comment type="catalytic activity">
    <reaction evidence="5">
        <text>Na(+)(in) = Na(+)(out)</text>
        <dbReference type="Rhea" id="RHEA:34963"/>
        <dbReference type="ChEBI" id="CHEBI:29101"/>
    </reaction>
</comment>
<comment type="activity regulation">
    <text evidence="6">Activated by a myriad of ligands such as acetylcholine, cytisine, nicotine, choline and epibatidine. The heteropentamer CHRNA3:CHRNB4 activity is blocked by the alpha-conotoxin ImI and AuIB.</text>
</comment>
<comment type="subunit">
    <text evidence="6">Neuronal AChR is composed of two different types of subunits: alpha and beta. CHRNB4/Beta-4 subunit can be combined to CHRNA2/alpha-2, CHRNA3/alpha-3 or CHRNA4/alpha-4, CHRNA5/alpha-5 and CHRNB3/beta-3 to give rise to functional receptors.</text>
</comment>
<comment type="interaction">
    <interactant intactId="EBI-10686176">
        <id>P26153</id>
    </interactant>
    <interactant intactId="EBI-10686191">
        <id>P09481</id>
        <label>CHRNA3</label>
    </interactant>
    <organismsDiffer>false</organismsDiffer>
    <experiments>3</experiments>
</comment>
<comment type="interaction">
    <interactant intactId="EBI-10686176">
        <id>P26153</id>
    </interactant>
    <interactant intactId="EBI-10686157">
        <id>P26152</id>
        <label>CHRNA5</label>
    </interactant>
    <organismsDiffer>false</organismsDiffer>
    <experiments>4</experiments>
</comment>
<comment type="subcellular location">
    <subcellularLocation>
        <location evidence="2">Synaptic cell membrane</location>
        <topology evidence="8">Multi-pass membrane protein</topology>
    </subcellularLocation>
    <subcellularLocation>
        <location evidence="2">Cell membrane</location>
        <topology evidence="8">Multi-pass membrane protein</topology>
    </subcellularLocation>
</comment>
<comment type="developmental stage">
    <text>High levels in the developing ciliary and superior cervical ganglia.</text>
</comment>
<comment type="similarity">
    <text evidence="9">Belongs to the ligand-gated ion channel (TC 1.A.9) family. Acetylcholine receptor (TC 1.A.9.1) subfamily. Beta-4/CHRNB4 sub-subfamily.</text>
</comment>
<keyword id="KW-1003">Cell membrane</keyword>
<keyword id="KW-1015">Disulfide bond</keyword>
<keyword id="KW-0325">Glycoprotein</keyword>
<keyword id="KW-0407">Ion channel</keyword>
<keyword id="KW-0406">Ion transport</keyword>
<keyword id="KW-1071">Ligand-gated ion channel</keyword>
<keyword id="KW-0472">Membrane</keyword>
<keyword id="KW-0479">Metal-binding</keyword>
<keyword id="KW-0675">Receptor</keyword>
<keyword id="KW-1185">Reference proteome</keyword>
<keyword id="KW-0732">Signal</keyword>
<keyword id="KW-0915">Sodium</keyword>
<keyword id="KW-0770">Synapse</keyword>
<keyword id="KW-0812">Transmembrane</keyword>
<keyword id="KW-1133">Transmembrane helix</keyword>
<keyword id="KW-0813">Transport</keyword>
<evidence type="ECO:0000250" key="1"/>
<evidence type="ECO:0000250" key="2">
    <source>
        <dbReference type="UniProtKB" id="P04757"/>
    </source>
</evidence>
<evidence type="ECO:0000250" key="3">
    <source>
        <dbReference type="UniProtKB" id="P04758"/>
    </source>
</evidence>
<evidence type="ECO:0000250" key="4">
    <source>
        <dbReference type="UniProtKB" id="P12392"/>
    </source>
</evidence>
<evidence type="ECO:0000250" key="5">
    <source>
        <dbReference type="UniProtKB" id="P17787"/>
    </source>
</evidence>
<evidence type="ECO:0000250" key="6">
    <source>
        <dbReference type="UniProtKB" id="P30926"/>
    </source>
</evidence>
<evidence type="ECO:0000250" key="7">
    <source>
        <dbReference type="UniProtKB" id="Q8R493"/>
    </source>
</evidence>
<evidence type="ECO:0000255" key="8"/>
<evidence type="ECO:0000305" key="9"/>
<protein>
    <recommendedName>
        <fullName>Neuronal acetylcholine receptor subunit beta-4</fullName>
    </recommendedName>
    <alternativeName>
        <fullName>Neuronal acetylcholine receptor non-alpha-3 chain</fullName>
        <shortName>N-alpha 3</shortName>
    </alternativeName>
</protein>
<name>ACHB4_CHICK</name>
<gene>
    <name type="primary">CHRNB4</name>
</gene>
<proteinExistence type="evidence at protein level"/>
<organism>
    <name type="scientific">Gallus gallus</name>
    <name type="common">Chicken</name>
    <dbReference type="NCBI Taxonomy" id="9031"/>
    <lineage>
        <taxon>Eukaryota</taxon>
        <taxon>Metazoa</taxon>
        <taxon>Chordata</taxon>
        <taxon>Craniata</taxon>
        <taxon>Vertebrata</taxon>
        <taxon>Euteleostomi</taxon>
        <taxon>Archelosauria</taxon>
        <taxon>Archosauria</taxon>
        <taxon>Dinosauria</taxon>
        <taxon>Saurischia</taxon>
        <taxon>Theropoda</taxon>
        <taxon>Coelurosauria</taxon>
        <taxon>Aves</taxon>
        <taxon>Neognathae</taxon>
        <taxon>Galloanserae</taxon>
        <taxon>Galliformes</taxon>
        <taxon>Phasianidae</taxon>
        <taxon>Phasianinae</taxon>
        <taxon>Gallus</taxon>
    </lineage>
</organism>
<sequence length="470" mass="53785">STAADAEEKLMNHLLSPDRYNKLIRPAVNSSQLVSIELQVSLAQLISVNEREQIMTTNVWLNQEWIDYRLAWKPSDYEGINMLRIPAKHIWLPDIVLYNNADGTYEVSLYTNAIVQNNGSIRWLPPAIYKSACKIEVKHFPFDQQNCTLKFRSWTYDHTEIDMVLKTSMASMDDFTPSGEWDIVALPGRRTENPLDPNYVDVTYDFIIKRKPLFYTINLIIPCVLITSLAILVFYLPSDCGEKMTLCISVLLALTVFLLLISKIVPPTSLDVPLIGKYLMFTMVLVTFSIVTSVCVLNVHHRSPSTHTMPPWVKLVFLERLPAYLFMKRPENNSPRQKPANCKKTRAENLCMDPADFYKNSTYFVNTASAKKYDMKITDTLDNVSSHQDFRLRTGTKFSPEVQEAIDGVSFIAEHMKSDDNDQSVIEDWKYVAMVVDRLFLWIFVLVCVLGTVGLFLQPLFQNHIAATNP</sequence>
<reference key="1">
    <citation type="journal article" date="1990" name="J. Biol. Chem.">
        <title>Alpha 5, alpha 3, and non-alpha 3. Three clustered avian genes encoding neuronal nicotinic acetylcholine receptor-related subunits.</title>
        <authorList>
            <person name="Couturier S."/>
            <person name="Erkman L."/>
            <person name="Valera S."/>
            <person name="Rungger D."/>
            <person name="Bertrand S."/>
            <person name="Boulter J."/>
            <person name="Ballivet M."/>
            <person name="Bertrand D."/>
        </authorList>
    </citation>
    <scope>NUCLEOTIDE SEQUENCE [MRNA]</scope>
    <source>
        <strain>White leghorn</strain>
        <tissue>Brain</tissue>
    </source>
</reference>